<gene>
    <name type="ordered locus">BAV0774</name>
</gene>
<comment type="function">
    <text evidence="1">Catalyzes the hydrolytic deamination of adenine to hypoxanthine. Plays an important role in the purine salvage pathway and in nitrogen catabolism.</text>
</comment>
<comment type="catalytic activity">
    <reaction evidence="1">
        <text>adenine + H2O + H(+) = hypoxanthine + NH4(+)</text>
        <dbReference type="Rhea" id="RHEA:23688"/>
        <dbReference type="ChEBI" id="CHEBI:15377"/>
        <dbReference type="ChEBI" id="CHEBI:15378"/>
        <dbReference type="ChEBI" id="CHEBI:16708"/>
        <dbReference type="ChEBI" id="CHEBI:17368"/>
        <dbReference type="ChEBI" id="CHEBI:28938"/>
        <dbReference type="EC" id="3.5.4.2"/>
    </reaction>
</comment>
<comment type="cofactor">
    <cofactor evidence="1">
        <name>Zn(2+)</name>
        <dbReference type="ChEBI" id="CHEBI:29105"/>
    </cofactor>
    <text evidence="1">Binds 1 zinc ion per subunit.</text>
</comment>
<comment type="similarity">
    <text evidence="1">Belongs to the metallo-dependent hydrolases superfamily. Adenosine and AMP deaminases family. Adenine deaminase type 2 subfamily.</text>
</comment>
<keyword id="KW-0378">Hydrolase</keyword>
<keyword id="KW-0479">Metal-binding</keyword>
<keyword id="KW-0546">Nucleotide metabolism</keyword>
<keyword id="KW-1185">Reference proteome</keyword>
<keyword id="KW-0862">Zinc</keyword>
<proteinExistence type="inferred from homology"/>
<sequence>MQDWLTALPKAELHIHLEGALEPELLFALAQRNGVTLPWPDIDALRQAYQYQNLQEFLDLYYQGAHVLRTEQDFYDLTWAYLRKCAEQGVTHTEPFFDPQTHTDRGVPFQVVLSGIQAALADGRRDLGIQSGLILSFLRHLPEEAAMRTLDEALPYRDAFIAVGLDSSEAGFPPRLFERVFARARAEGLPAVAHAGEEGPPEYIWEALERLQVKRIDHGVRAWEDPRLIAHLVDTQIPLTVCPLSNVRLQVFEHMGQHNVLEMLERGLNVCINSDDPAYFGGYVLENFMALREHLGMSQEQARRLAANSLASVLTA</sequence>
<protein>
    <recommendedName>
        <fullName evidence="1">Adenine deaminase</fullName>
        <shortName evidence="1">ADE</shortName>
        <ecNumber evidence="1">3.5.4.2</ecNumber>
    </recommendedName>
    <alternativeName>
        <fullName evidence="1">Adenine aminohydrolase</fullName>
        <shortName evidence="1">AAH</shortName>
    </alternativeName>
</protein>
<evidence type="ECO:0000255" key="1">
    <source>
        <dbReference type="HAMAP-Rule" id="MF_01962"/>
    </source>
</evidence>
<name>ADE_BORA1</name>
<feature type="chain" id="PRO_1000017653" description="Adenine deaminase">
    <location>
        <begin position="1"/>
        <end position="316"/>
    </location>
</feature>
<feature type="active site" description="Proton donor" evidence="1">
    <location>
        <position position="197"/>
    </location>
</feature>
<feature type="binding site" evidence="1">
    <location>
        <position position="14"/>
    </location>
    <ligand>
        <name>Zn(2+)</name>
        <dbReference type="ChEBI" id="CHEBI:29105"/>
        <note>catalytic</note>
    </ligand>
</feature>
<feature type="binding site" evidence="1">
    <location>
        <position position="16"/>
    </location>
    <ligand>
        <name>Zn(2+)</name>
        <dbReference type="ChEBI" id="CHEBI:29105"/>
        <note>catalytic</note>
    </ligand>
</feature>
<feature type="binding site" evidence="1">
    <location>
        <position position="194"/>
    </location>
    <ligand>
        <name>Zn(2+)</name>
        <dbReference type="ChEBI" id="CHEBI:29105"/>
        <note>catalytic</note>
    </ligand>
</feature>
<feature type="binding site" evidence="1">
    <location>
        <position position="275"/>
    </location>
    <ligand>
        <name>Zn(2+)</name>
        <dbReference type="ChEBI" id="CHEBI:29105"/>
        <note>catalytic</note>
    </ligand>
</feature>
<feature type="binding site" evidence="1">
    <location>
        <position position="276"/>
    </location>
    <ligand>
        <name>substrate</name>
    </ligand>
</feature>
<feature type="site" description="Important for catalytic activity" evidence="1">
    <location>
        <position position="218"/>
    </location>
</feature>
<dbReference type="EC" id="3.5.4.2" evidence="1"/>
<dbReference type="EMBL" id="AM167904">
    <property type="protein sequence ID" value="CAJ48386.1"/>
    <property type="molecule type" value="Genomic_DNA"/>
</dbReference>
<dbReference type="RefSeq" id="WP_012416468.1">
    <property type="nucleotide sequence ID" value="NC_010645.1"/>
</dbReference>
<dbReference type="SMR" id="Q2KWR7"/>
<dbReference type="STRING" id="360910.BAV0774"/>
<dbReference type="GeneID" id="92936044"/>
<dbReference type="KEGG" id="bav:BAV0774"/>
<dbReference type="eggNOG" id="COG1816">
    <property type="taxonomic scope" value="Bacteria"/>
</dbReference>
<dbReference type="HOGENOM" id="CLU_039228_7_0_4"/>
<dbReference type="OrthoDB" id="105475at2"/>
<dbReference type="Proteomes" id="UP000001977">
    <property type="component" value="Chromosome"/>
</dbReference>
<dbReference type="GO" id="GO:0005829">
    <property type="term" value="C:cytosol"/>
    <property type="evidence" value="ECO:0007669"/>
    <property type="project" value="TreeGrafter"/>
</dbReference>
<dbReference type="GO" id="GO:0000034">
    <property type="term" value="F:adenine deaminase activity"/>
    <property type="evidence" value="ECO:0007669"/>
    <property type="project" value="UniProtKB-UniRule"/>
</dbReference>
<dbReference type="GO" id="GO:0008270">
    <property type="term" value="F:zinc ion binding"/>
    <property type="evidence" value="ECO:0007669"/>
    <property type="project" value="UniProtKB-UniRule"/>
</dbReference>
<dbReference type="GO" id="GO:0006146">
    <property type="term" value="P:adenine catabolic process"/>
    <property type="evidence" value="ECO:0007669"/>
    <property type="project" value="UniProtKB-UniRule"/>
</dbReference>
<dbReference type="GO" id="GO:0043103">
    <property type="term" value="P:hypoxanthine salvage"/>
    <property type="evidence" value="ECO:0007669"/>
    <property type="project" value="UniProtKB-UniRule"/>
</dbReference>
<dbReference type="GO" id="GO:0009117">
    <property type="term" value="P:nucleotide metabolic process"/>
    <property type="evidence" value="ECO:0007669"/>
    <property type="project" value="UniProtKB-KW"/>
</dbReference>
<dbReference type="CDD" id="cd01320">
    <property type="entry name" value="ADA"/>
    <property type="match status" value="1"/>
</dbReference>
<dbReference type="FunFam" id="3.20.20.140:FF:000039">
    <property type="entry name" value="Adenine deaminase"/>
    <property type="match status" value="1"/>
</dbReference>
<dbReference type="Gene3D" id="3.20.20.140">
    <property type="entry name" value="Metal-dependent hydrolases"/>
    <property type="match status" value="1"/>
</dbReference>
<dbReference type="HAMAP" id="MF_01962">
    <property type="entry name" value="Adenine_deaminase"/>
    <property type="match status" value="1"/>
</dbReference>
<dbReference type="InterPro" id="IPR001365">
    <property type="entry name" value="A_deaminase_dom"/>
</dbReference>
<dbReference type="InterPro" id="IPR028892">
    <property type="entry name" value="ADE"/>
</dbReference>
<dbReference type="InterPro" id="IPR006330">
    <property type="entry name" value="Ado/ade_deaminase"/>
</dbReference>
<dbReference type="InterPro" id="IPR032466">
    <property type="entry name" value="Metal_Hydrolase"/>
</dbReference>
<dbReference type="NCBIfam" id="TIGR01430">
    <property type="entry name" value="aden_deam"/>
    <property type="match status" value="1"/>
</dbReference>
<dbReference type="NCBIfam" id="NF006850">
    <property type="entry name" value="PRK09358.1-6"/>
    <property type="match status" value="1"/>
</dbReference>
<dbReference type="PANTHER" id="PTHR43114">
    <property type="entry name" value="ADENINE DEAMINASE"/>
    <property type="match status" value="1"/>
</dbReference>
<dbReference type="PANTHER" id="PTHR43114:SF6">
    <property type="entry name" value="ADENINE DEAMINASE"/>
    <property type="match status" value="1"/>
</dbReference>
<dbReference type="Pfam" id="PF00962">
    <property type="entry name" value="A_deaminase"/>
    <property type="match status" value="1"/>
</dbReference>
<dbReference type="SUPFAM" id="SSF51556">
    <property type="entry name" value="Metallo-dependent hydrolases"/>
    <property type="match status" value="1"/>
</dbReference>
<accession>Q2KWR7</accession>
<reference key="1">
    <citation type="journal article" date="2006" name="J. Bacteriol.">
        <title>Comparison of the genome sequence of the poultry pathogen Bordetella avium with those of B. bronchiseptica, B. pertussis, and B. parapertussis reveals extensive diversity in surface structures associated with host interaction.</title>
        <authorList>
            <person name="Sebaihia M."/>
            <person name="Preston A."/>
            <person name="Maskell D.J."/>
            <person name="Kuzmiak H."/>
            <person name="Connell T.D."/>
            <person name="King N.D."/>
            <person name="Orndorff P.E."/>
            <person name="Miyamoto D.M."/>
            <person name="Thomson N.R."/>
            <person name="Harris D."/>
            <person name="Goble A."/>
            <person name="Lord A."/>
            <person name="Murphy L."/>
            <person name="Quail M.A."/>
            <person name="Rutter S."/>
            <person name="Squares R."/>
            <person name="Squares S."/>
            <person name="Woodward J."/>
            <person name="Parkhill J."/>
            <person name="Temple L.M."/>
        </authorList>
    </citation>
    <scope>NUCLEOTIDE SEQUENCE [LARGE SCALE GENOMIC DNA]</scope>
    <source>
        <strain>197N</strain>
    </source>
</reference>
<organism>
    <name type="scientific">Bordetella avium (strain 197N)</name>
    <dbReference type="NCBI Taxonomy" id="360910"/>
    <lineage>
        <taxon>Bacteria</taxon>
        <taxon>Pseudomonadati</taxon>
        <taxon>Pseudomonadota</taxon>
        <taxon>Betaproteobacteria</taxon>
        <taxon>Burkholderiales</taxon>
        <taxon>Alcaligenaceae</taxon>
        <taxon>Bordetella</taxon>
    </lineage>
</organism>